<reference key="1">
    <citation type="journal article" date="2000" name="Science">
        <title>The genome sequence of Drosophila melanogaster.</title>
        <authorList>
            <person name="Adams M.D."/>
            <person name="Celniker S.E."/>
            <person name="Holt R.A."/>
            <person name="Evans C.A."/>
            <person name="Gocayne J.D."/>
            <person name="Amanatides P.G."/>
            <person name="Scherer S.E."/>
            <person name="Li P.W."/>
            <person name="Hoskins R.A."/>
            <person name="Galle R.F."/>
            <person name="George R.A."/>
            <person name="Lewis S.E."/>
            <person name="Richards S."/>
            <person name="Ashburner M."/>
            <person name="Henderson S.N."/>
            <person name="Sutton G.G."/>
            <person name="Wortman J.R."/>
            <person name="Yandell M.D."/>
            <person name="Zhang Q."/>
            <person name="Chen L.X."/>
            <person name="Brandon R.C."/>
            <person name="Rogers Y.-H.C."/>
            <person name="Blazej R.G."/>
            <person name="Champe M."/>
            <person name="Pfeiffer B.D."/>
            <person name="Wan K.H."/>
            <person name="Doyle C."/>
            <person name="Baxter E.G."/>
            <person name="Helt G."/>
            <person name="Nelson C.R."/>
            <person name="Miklos G.L.G."/>
            <person name="Abril J.F."/>
            <person name="Agbayani A."/>
            <person name="An H.-J."/>
            <person name="Andrews-Pfannkoch C."/>
            <person name="Baldwin D."/>
            <person name="Ballew R.M."/>
            <person name="Basu A."/>
            <person name="Baxendale J."/>
            <person name="Bayraktaroglu L."/>
            <person name="Beasley E.M."/>
            <person name="Beeson K.Y."/>
            <person name="Benos P.V."/>
            <person name="Berman B.P."/>
            <person name="Bhandari D."/>
            <person name="Bolshakov S."/>
            <person name="Borkova D."/>
            <person name="Botchan M.R."/>
            <person name="Bouck J."/>
            <person name="Brokstein P."/>
            <person name="Brottier P."/>
            <person name="Burtis K.C."/>
            <person name="Busam D.A."/>
            <person name="Butler H."/>
            <person name="Cadieu E."/>
            <person name="Center A."/>
            <person name="Chandra I."/>
            <person name="Cherry J.M."/>
            <person name="Cawley S."/>
            <person name="Dahlke C."/>
            <person name="Davenport L.B."/>
            <person name="Davies P."/>
            <person name="de Pablos B."/>
            <person name="Delcher A."/>
            <person name="Deng Z."/>
            <person name="Mays A.D."/>
            <person name="Dew I."/>
            <person name="Dietz S.M."/>
            <person name="Dodson K."/>
            <person name="Doup L.E."/>
            <person name="Downes M."/>
            <person name="Dugan-Rocha S."/>
            <person name="Dunkov B.C."/>
            <person name="Dunn P."/>
            <person name="Durbin K.J."/>
            <person name="Evangelista C.C."/>
            <person name="Ferraz C."/>
            <person name="Ferriera S."/>
            <person name="Fleischmann W."/>
            <person name="Fosler C."/>
            <person name="Gabrielian A.E."/>
            <person name="Garg N.S."/>
            <person name="Gelbart W.M."/>
            <person name="Glasser K."/>
            <person name="Glodek A."/>
            <person name="Gong F."/>
            <person name="Gorrell J.H."/>
            <person name="Gu Z."/>
            <person name="Guan P."/>
            <person name="Harris M."/>
            <person name="Harris N.L."/>
            <person name="Harvey D.A."/>
            <person name="Heiman T.J."/>
            <person name="Hernandez J.R."/>
            <person name="Houck J."/>
            <person name="Hostin D."/>
            <person name="Houston K.A."/>
            <person name="Howland T.J."/>
            <person name="Wei M.-H."/>
            <person name="Ibegwam C."/>
            <person name="Jalali M."/>
            <person name="Kalush F."/>
            <person name="Karpen G.H."/>
            <person name="Ke Z."/>
            <person name="Kennison J.A."/>
            <person name="Ketchum K.A."/>
            <person name="Kimmel B.E."/>
            <person name="Kodira C.D."/>
            <person name="Kraft C.L."/>
            <person name="Kravitz S."/>
            <person name="Kulp D."/>
            <person name="Lai Z."/>
            <person name="Lasko P."/>
            <person name="Lei Y."/>
            <person name="Levitsky A.A."/>
            <person name="Li J.H."/>
            <person name="Li Z."/>
            <person name="Liang Y."/>
            <person name="Lin X."/>
            <person name="Liu X."/>
            <person name="Mattei B."/>
            <person name="McIntosh T.C."/>
            <person name="McLeod M.P."/>
            <person name="McPherson D."/>
            <person name="Merkulov G."/>
            <person name="Milshina N.V."/>
            <person name="Mobarry C."/>
            <person name="Morris J."/>
            <person name="Moshrefi A."/>
            <person name="Mount S.M."/>
            <person name="Moy M."/>
            <person name="Murphy B."/>
            <person name="Murphy L."/>
            <person name="Muzny D.M."/>
            <person name="Nelson D.L."/>
            <person name="Nelson D.R."/>
            <person name="Nelson K.A."/>
            <person name="Nixon K."/>
            <person name="Nusskern D.R."/>
            <person name="Pacleb J.M."/>
            <person name="Palazzolo M."/>
            <person name="Pittman G.S."/>
            <person name="Pan S."/>
            <person name="Pollard J."/>
            <person name="Puri V."/>
            <person name="Reese M.G."/>
            <person name="Reinert K."/>
            <person name="Remington K."/>
            <person name="Saunders R.D.C."/>
            <person name="Scheeler F."/>
            <person name="Shen H."/>
            <person name="Shue B.C."/>
            <person name="Siden-Kiamos I."/>
            <person name="Simpson M."/>
            <person name="Skupski M.P."/>
            <person name="Smith T.J."/>
            <person name="Spier E."/>
            <person name="Spradling A.C."/>
            <person name="Stapleton M."/>
            <person name="Strong R."/>
            <person name="Sun E."/>
            <person name="Svirskas R."/>
            <person name="Tector C."/>
            <person name="Turner R."/>
            <person name="Venter E."/>
            <person name="Wang A.H."/>
            <person name="Wang X."/>
            <person name="Wang Z.-Y."/>
            <person name="Wassarman D.A."/>
            <person name="Weinstock G.M."/>
            <person name="Weissenbach J."/>
            <person name="Williams S.M."/>
            <person name="Woodage T."/>
            <person name="Worley K.C."/>
            <person name="Wu D."/>
            <person name="Yang S."/>
            <person name="Yao Q.A."/>
            <person name="Ye J."/>
            <person name="Yeh R.-F."/>
            <person name="Zaveri J.S."/>
            <person name="Zhan M."/>
            <person name="Zhang G."/>
            <person name="Zhao Q."/>
            <person name="Zheng L."/>
            <person name="Zheng X.H."/>
            <person name="Zhong F.N."/>
            <person name="Zhong W."/>
            <person name="Zhou X."/>
            <person name="Zhu S.C."/>
            <person name="Zhu X."/>
            <person name="Smith H.O."/>
            <person name="Gibbs R.A."/>
            <person name="Myers E.W."/>
            <person name="Rubin G.M."/>
            <person name="Venter J.C."/>
        </authorList>
    </citation>
    <scope>NUCLEOTIDE SEQUENCE [LARGE SCALE GENOMIC DNA]</scope>
    <source>
        <strain>Berkeley</strain>
    </source>
</reference>
<reference key="2">
    <citation type="journal article" date="2002" name="Genome Biol.">
        <title>Annotation of the Drosophila melanogaster euchromatic genome: a systematic review.</title>
        <authorList>
            <person name="Misra S."/>
            <person name="Crosby M.A."/>
            <person name="Mungall C.J."/>
            <person name="Matthews B.B."/>
            <person name="Campbell K.S."/>
            <person name="Hradecky P."/>
            <person name="Huang Y."/>
            <person name="Kaminker J.S."/>
            <person name="Millburn G.H."/>
            <person name="Prochnik S.E."/>
            <person name="Smith C.D."/>
            <person name="Tupy J.L."/>
            <person name="Whitfield E.J."/>
            <person name="Bayraktaroglu L."/>
            <person name="Berman B.P."/>
            <person name="Bettencourt B.R."/>
            <person name="Celniker S.E."/>
            <person name="de Grey A.D.N.J."/>
            <person name="Drysdale R.A."/>
            <person name="Harris N.L."/>
            <person name="Richter J."/>
            <person name="Russo S."/>
            <person name="Schroeder A.J."/>
            <person name="Shu S.Q."/>
            <person name="Stapleton M."/>
            <person name="Yamada C."/>
            <person name="Ashburner M."/>
            <person name="Gelbart W.M."/>
            <person name="Rubin G.M."/>
            <person name="Lewis S.E."/>
        </authorList>
    </citation>
    <scope>GENOME REANNOTATION</scope>
    <source>
        <strain>Berkeley</strain>
    </source>
</reference>
<reference key="3">
    <citation type="submission" date="2004-10" db="EMBL/GenBank/DDBJ databases">
        <authorList>
            <person name="Stapleton M."/>
            <person name="Carlson J.W."/>
            <person name="Chavez C."/>
            <person name="Frise E."/>
            <person name="George R.A."/>
            <person name="Pacleb J.M."/>
            <person name="Park S."/>
            <person name="Wan K.H."/>
            <person name="Yu C."/>
            <person name="Rubin G.M."/>
            <person name="Celniker S.E."/>
        </authorList>
    </citation>
    <scope>NUCLEOTIDE SEQUENCE [LARGE SCALE MRNA]</scope>
    <source>
        <strain>Berkeley</strain>
        <tissue>Testis</tissue>
    </source>
</reference>
<reference key="4">
    <citation type="journal article" date="1983" name="Dev. Biol.">
        <title>Expression of Drosophila heat-shock cognate genes during heat shock and development.</title>
        <authorList>
            <person name="Craig E.A."/>
            <person name="Ingolia T.D."/>
            <person name="Manseau L.J."/>
        </authorList>
    </citation>
    <scope>NUCLEOTIDE SEQUENCE [GENOMIC DNA] OF 1-68</scope>
</reference>
<dbReference type="EMBL" id="AE014297">
    <property type="protein sequence ID" value="AAF54899.1"/>
    <property type="molecule type" value="Genomic_DNA"/>
</dbReference>
<dbReference type="EMBL" id="BT016141">
    <property type="protein sequence ID" value="AAV37026.1"/>
    <property type="molecule type" value="mRNA"/>
</dbReference>
<dbReference type="EMBL" id="K01297">
    <property type="protein sequence ID" value="AAA28630.1"/>
    <property type="molecule type" value="Genomic_DNA"/>
</dbReference>
<dbReference type="EMBL" id="K01296">
    <property type="protein sequence ID" value="AAA28630.1"/>
    <property type="status" value="JOINED"/>
    <property type="molecule type" value="Genomic_DNA"/>
</dbReference>
<dbReference type="RefSeq" id="NP_524339.1">
    <property type="nucleotide sequence ID" value="NM_079615.4"/>
</dbReference>
<dbReference type="PDB" id="2B26">
    <property type="method" value="X-ray"/>
    <property type="resolution" value="3.20 A"/>
    <property type="chains" value="D=626-632"/>
</dbReference>
<dbReference type="PDBsum" id="2B26"/>
<dbReference type="SMR" id="P11146"/>
<dbReference type="BioGRID" id="66696">
    <property type="interactions" value="11"/>
</dbReference>
<dbReference type="FunCoup" id="P11146">
    <property type="interactions" value="362"/>
</dbReference>
<dbReference type="IntAct" id="P11146">
    <property type="interactions" value="18"/>
</dbReference>
<dbReference type="STRING" id="7227.FBpp0082175"/>
<dbReference type="PaxDb" id="7227-FBpp0082175"/>
<dbReference type="DNASU" id="41609"/>
<dbReference type="EnsemblMetazoa" id="FBtr0082707">
    <property type="protein sequence ID" value="FBpp0082175"/>
    <property type="gene ID" value="FBgn0001217"/>
</dbReference>
<dbReference type="GeneID" id="41609"/>
<dbReference type="KEGG" id="dme:Dmel_CG7756"/>
<dbReference type="AGR" id="FB:FBgn0001217"/>
<dbReference type="CTD" id="41609"/>
<dbReference type="FlyBase" id="FBgn0001217">
    <property type="gene designation" value="Hsc70-2"/>
</dbReference>
<dbReference type="VEuPathDB" id="VectorBase:FBgn0001217"/>
<dbReference type="eggNOG" id="KOG0101">
    <property type="taxonomic scope" value="Eukaryota"/>
</dbReference>
<dbReference type="GeneTree" id="ENSGT00940000154813"/>
<dbReference type="HOGENOM" id="CLU_005965_3_0_1"/>
<dbReference type="InParanoid" id="P11146"/>
<dbReference type="OMA" id="WQNNKVE"/>
<dbReference type="OrthoDB" id="2401965at2759"/>
<dbReference type="PhylomeDB" id="P11146"/>
<dbReference type="Reactome" id="R-DME-3371497">
    <property type="pathway name" value="HSP90 chaperone cycle for steroid hormone receptors (SHR) in the presence of ligand"/>
</dbReference>
<dbReference type="BioGRID-ORCS" id="41609">
    <property type="hits" value="0 hits in 3 CRISPR screens"/>
</dbReference>
<dbReference type="ChiTaRS" id="Hsc70-2">
    <property type="organism name" value="fly"/>
</dbReference>
<dbReference type="EvolutionaryTrace" id="P11146"/>
<dbReference type="GenomeRNAi" id="41609"/>
<dbReference type="PRO" id="PR:P11146"/>
<dbReference type="Proteomes" id="UP000000803">
    <property type="component" value="Chromosome 3R"/>
</dbReference>
<dbReference type="Bgee" id="FBgn0001217">
    <property type="expression patterns" value="Expressed in early elongation stage spermatid (Drosophila) in testis and 52 other cell types or tissues"/>
</dbReference>
<dbReference type="GO" id="GO:0005737">
    <property type="term" value="C:cytoplasm"/>
    <property type="evidence" value="ECO:0000318"/>
    <property type="project" value="GO_Central"/>
</dbReference>
<dbReference type="GO" id="GO:0005829">
    <property type="term" value="C:cytosol"/>
    <property type="evidence" value="ECO:0000318"/>
    <property type="project" value="GO_Central"/>
</dbReference>
<dbReference type="GO" id="GO:0005634">
    <property type="term" value="C:nucleus"/>
    <property type="evidence" value="ECO:0000318"/>
    <property type="project" value="GO_Central"/>
</dbReference>
<dbReference type="GO" id="GO:0005886">
    <property type="term" value="C:plasma membrane"/>
    <property type="evidence" value="ECO:0000318"/>
    <property type="project" value="GO_Central"/>
</dbReference>
<dbReference type="GO" id="GO:0005524">
    <property type="term" value="F:ATP binding"/>
    <property type="evidence" value="ECO:0007669"/>
    <property type="project" value="UniProtKB-KW"/>
</dbReference>
<dbReference type="GO" id="GO:0016887">
    <property type="term" value="F:ATP hydrolysis activity"/>
    <property type="evidence" value="ECO:0000318"/>
    <property type="project" value="GO_Central"/>
</dbReference>
<dbReference type="GO" id="GO:0140662">
    <property type="term" value="F:ATP-dependent protein folding chaperone"/>
    <property type="evidence" value="ECO:0007669"/>
    <property type="project" value="InterPro"/>
</dbReference>
<dbReference type="GO" id="GO:0031072">
    <property type="term" value="F:heat shock protein binding"/>
    <property type="evidence" value="ECO:0000318"/>
    <property type="project" value="GO_Central"/>
</dbReference>
<dbReference type="GO" id="GO:0044183">
    <property type="term" value="F:protein folding chaperone"/>
    <property type="evidence" value="ECO:0000318"/>
    <property type="project" value="GO_Central"/>
</dbReference>
<dbReference type="GO" id="GO:0051085">
    <property type="term" value="P:chaperone cofactor-dependent protein refolding"/>
    <property type="evidence" value="ECO:0000318"/>
    <property type="project" value="GO_Central"/>
</dbReference>
<dbReference type="GO" id="GO:0042026">
    <property type="term" value="P:protein refolding"/>
    <property type="evidence" value="ECO:0000318"/>
    <property type="project" value="GO_Central"/>
</dbReference>
<dbReference type="CDD" id="cd10233">
    <property type="entry name" value="ASKHA_NBD_HSP70_HSPA1"/>
    <property type="match status" value="1"/>
</dbReference>
<dbReference type="FunFam" id="2.60.34.10:FF:000002">
    <property type="entry name" value="Heat shock 70 kDa"/>
    <property type="match status" value="1"/>
</dbReference>
<dbReference type="FunFam" id="3.30.420.40:FF:000172">
    <property type="entry name" value="Heat shock 70 kDa protein"/>
    <property type="match status" value="1"/>
</dbReference>
<dbReference type="FunFam" id="3.30.30.30:FF:000001">
    <property type="entry name" value="heat shock 70 kDa protein-like"/>
    <property type="match status" value="1"/>
</dbReference>
<dbReference type="FunFam" id="3.90.640.10:FF:000134">
    <property type="entry name" value="Heat shock cognate 71 kDa protein"/>
    <property type="match status" value="1"/>
</dbReference>
<dbReference type="FunFam" id="1.20.1270.10:FF:000024">
    <property type="entry name" value="Heat shock protein 70"/>
    <property type="match status" value="1"/>
</dbReference>
<dbReference type="FunFam" id="3.30.420.40:FF:000026">
    <property type="entry name" value="Heat shock protein 70"/>
    <property type="match status" value="1"/>
</dbReference>
<dbReference type="Gene3D" id="1.20.1270.10">
    <property type="match status" value="1"/>
</dbReference>
<dbReference type="Gene3D" id="3.30.30.30">
    <property type="match status" value="1"/>
</dbReference>
<dbReference type="Gene3D" id="3.30.420.40">
    <property type="match status" value="2"/>
</dbReference>
<dbReference type="Gene3D" id="3.90.640.10">
    <property type="entry name" value="Actin, Chain A, domain 4"/>
    <property type="match status" value="1"/>
</dbReference>
<dbReference type="Gene3D" id="2.60.34.10">
    <property type="entry name" value="Substrate Binding Domain Of DNAk, Chain A, domain 1"/>
    <property type="match status" value="1"/>
</dbReference>
<dbReference type="InterPro" id="IPR043129">
    <property type="entry name" value="ATPase_NBD"/>
</dbReference>
<dbReference type="InterPro" id="IPR018181">
    <property type="entry name" value="Heat_shock_70_CS"/>
</dbReference>
<dbReference type="InterPro" id="IPR029048">
    <property type="entry name" value="HSP70_C_sf"/>
</dbReference>
<dbReference type="InterPro" id="IPR029047">
    <property type="entry name" value="HSP70_peptide-bd_sf"/>
</dbReference>
<dbReference type="InterPro" id="IPR013126">
    <property type="entry name" value="Hsp_70_fam"/>
</dbReference>
<dbReference type="NCBIfam" id="NF001413">
    <property type="entry name" value="PRK00290.1"/>
    <property type="match status" value="1"/>
</dbReference>
<dbReference type="PANTHER" id="PTHR19375">
    <property type="entry name" value="HEAT SHOCK PROTEIN 70KDA"/>
    <property type="match status" value="1"/>
</dbReference>
<dbReference type="Pfam" id="PF00012">
    <property type="entry name" value="HSP70"/>
    <property type="match status" value="1"/>
</dbReference>
<dbReference type="PRINTS" id="PR00301">
    <property type="entry name" value="HEATSHOCK70"/>
</dbReference>
<dbReference type="SUPFAM" id="SSF53067">
    <property type="entry name" value="Actin-like ATPase domain"/>
    <property type="match status" value="2"/>
</dbReference>
<dbReference type="SUPFAM" id="SSF100934">
    <property type="entry name" value="Heat shock protein 70kD (HSP70), C-terminal subdomain"/>
    <property type="match status" value="1"/>
</dbReference>
<dbReference type="SUPFAM" id="SSF100920">
    <property type="entry name" value="Heat shock protein 70kD (HSP70), peptide-binding domain"/>
    <property type="match status" value="1"/>
</dbReference>
<dbReference type="PROSITE" id="PS00297">
    <property type="entry name" value="HSP70_1"/>
    <property type="match status" value="1"/>
</dbReference>
<dbReference type="PROSITE" id="PS00329">
    <property type="entry name" value="HSP70_2"/>
    <property type="match status" value="1"/>
</dbReference>
<dbReference type="PROSITE" id="PS01036">
    <property type="entry name" value="HSP70_3"/>
    <property type="match status" value="1"/>
</dbReference>
<comment type="developmental stage">
    <text>Heat shock cognate proteins are expressed constitutively during normal development.</text>
</comment>
<comment type="similarity">
    <text evidence="2">Belongs to the heat shock protein 70 family.</text>
</comment>
<protein>
    <recommendedName>
        <fullName>Heat shock 70 kDa protein cognate 2</fullName>
    </recommendedName>
    <alternativeName>
        <fullName>Heat shock 70 kDa protein 87D</fullName>
    </alternativeName>
</protein>
<proteinExistence type="evidence at protein level"/>
<gene>
    <name type="primary">Hsc70-2</name>
    <name type="synonym">Hsc2</name>
    <name type="ORF">CG7756</name>
</gene>
<organism>
    <name type="scientific">Drosophila melanogaster</name>
    <name type="common">Fruit fly</name>
    <dbReference type="NCBI Taxonomy" id="7227"/>
    <lineage>
        <taxon>Eukaryota</taxon>
        <taxon>Metazoa</taxon>
        <taxon>Ecdysozoa</taxon>
        <taxon>Arthropoda</taxon>
        <taxon>Hexapoda</taxon>
        <taxon>Insecta</taxon>
        <taxon>Pterygota</taxon>
        <taxon>Neoptera</taxon>
        <taxon>Endopterygota</taxon>
        <taxon>Diptera</taxon>
        <taxon>Brachycera</taxon>
        <taxon>Muscomorpha</taxon>
        <taxon>Ephydroidea</taxon>
        <taxon>Drosophilidae</taxon>
        <taxon>Drosophila</taxon>
        <taxon>Sophophora</taxon>
    </lineage>
</organism>
<feature type="chain" id="PRO_0000078339" description="Heat shock 70 kDa protein cognate 2">
    <location>
        <begin position="1"/>
        <end position="633"/>
    </location>
</feature>
<feature type="region of interest" description="Disordered" evidence="1">
    <location>
        <begin position="610"/>
        <end position="633"/>
    </location>
</feature>
<accession>P11146</accession>
<accession>Q5U0V1</accession>
<accession>Q9VFZ5</accession>
<keyword id="KW-0002">3D-structure</keyword>
<keyword id="KW-0067">ATP-binding</keyword>
<keyword id="KW-0547">Nucleotide-binding</keyword>
<keyword id="KW-1185">Reference proteome</keyword>
<keyword id="KW-0346">Stress response</keyword>
<evidence type="ECO:0000256" key="1">
    <source>
        <dbReference type="SAM" id="MobiDB-lite"/>
    </source>
</evidence>
<evidence type="ECO:0000305" key="2"/>
<sequence length="633" mass="69722">MGKIPAIGIDLGTTYSCVGVWQNSKVEIIANDQGNRTTPSYVAFNETERLIGDPAKNQVAMNAKNTVFDAKRLIGRKFDDKKIQEDLKLWPFKVINEKGKPKIEVEFKGERKRFAPEEISSMVLTKMREIAEVYLGGKVKDAVVTVPAYFNDSQRQATKDAGSIAGLNVLRIINEPTAAALAYGLDKNLKGERNVLIFDLGGGTFDVSVLSIDEGSLFEVKATAGDTHLGGEDFDNRLVNHFAEEFKRKHKSDIKGNARALRRLRTACERAKRTLSSSTEASLEIDALHEGIDFYSKISRARFEELNMDLFRSTMQPVERALSDAKMDKKAIHDVVLVGGSTRIPKIQKLLQDLFGGKQLNLSINPDEAVAYGAAVQAAILTGVGSSQIQDLLLVDVAPLSLGIETAGGVMTNLVERNARIPCKQQQIFTTYSDNQNAVTIQVYEGERAMTKDNNLLGTFNLTGIPPAPRGVPQIEVAFDLNADGILNVNAKDNSTGKSEKITISNDKGRLSKAEIDRMLSEAEKYKVEDDRQRERVQSKNNLEAYIYACRQAVDDAPSGVLSETERSKVRDKCSSEASWLDKNSLAEKEEFESHLKECQRICTPIMSKIHGGKKGKSSMGKGSHPTVEEVDG</sequence>
<name>HSP7B_DROME</name>